<evidence type="ECO:0000255" key="1">
    <source>
        <dbReference type="HAMAP-Rule" id="MF_01614"/>
    </source>
</evidence>
<name>NAMA_LISMH</name>
<dbReference type="EC" id="1.6.99.1" evidence="1"/>
<dbReference type="EMBL" id="CP001175">
    <property type="protein sequence ID" value="ACK38491.1"/>
    <property type="molecule type" value="Genomic_DNA"/>
</dbReference>
<dbReference type="RefSeq" id="WP_012580772.1">
    <property type="nucleotide sequence ID" value="NC_011660.1"/>
</dbReference>
<dbReference type="SMR" id="B8DBP0"/>
<dbReference type="KEGG" id="lmh:LMHCC_0129"/>
<dbReference type="HOGENOM" id="CLU_012153_2_1_9"/>
<dbReference type="GO" id="GO:0010181">
    <property type="term" value="F:FMN binding"/>
    <property type="evidence" value="ECO:0007669"/>
    <property type="project" value="UniProtKB-UniRule"/>
</dbReference>
<dbReference type="GO" id="GO:0050661">
    <property type="term" value="F:NADP binding"/>
    <property type="evidence" value="ECO:0007669"/>
    <property type="project" value="UniProtKB-UniRule"/>
</dbReference>
<dbReference type="GO" id="GO:0003959">
    <property type="term" value="F:NADPH dehydrogenase activity"/>
    <property type="evidence" value="ECO:0007669"/>
    <property type="project" value="UniProtKB-UniRule"/>
</dbReference>
<dbReference type="GO" id="GO:0009636">
    <property type="term" value="P:response to toxic substance"/>
    <property type="evidence" value="ECO:0007669"/>
    <property type="project" value="UniProtKB-KW"/>
</dbReference>
<dbReference type="CDD" id="cd02932">
    <property type="entry name" value="OYE_YqiM_FMN"/>
    <property type="match status" value="1"/>
</dbReference>
<dbReference type="FunFam" id="3.20.20.70:FF:000299">
    <property type="entry name" value="NADPH dehydrogenase"/>
    <property type="match status" value="1"/>
</dbReference>
<dbReference type="Gene3D" id="3.20.20.70">
    <property type="entry name" value="Aldolase class I"/>
    <property type="match status" value="1"/>
</dbReference>
<dbReference type="HAMAP" id="MF_01614">
    <property type="entry name" value="NamA"/>
    <property type="match status" value="1"/>
</dbReference>
<dbReference type="InterPro" id="IPR013785">
    <property type="entry name" value="Aldolase_TIM"/>
</dbReference>
<dbReference type="InterPro" id="IPR023663">
    <property type="entry name" value="NADPH_DH_bac"/>
</dbReference>
<dbReference type="InterPro" id="IPR001155">
    <property type="entry name" value="OxRdtase_FMN_N"/>
</dbReference>
<dbReference type="InterPro" id="IPR044152">
    <property type="entry name" value="YqjM-like"/>
</dbReference>
<dbReference type="NCBIfam" id="NF010047">
    <property type="entry name" value="PRK13523.1"/>
    <property type="match status" value="1"/>
</dbReference>
<dbReference type="PANTHER" id="PTHR43303">
    <property type="entry name" value="NADPH DEHYDROGENASE C23G7.10C-RELATED"/>
    <property type="match status" value="1"/>
</dbReference>
<dbReference type="PANTHER" id="PTHR43303:SF4">
    <property type="entry name" value="NADPH DEHYDROGENASE C23G7.10C-RELATED"/>
    <property type="match status" value="1"/>
</dbReference>
<dbReference type="Pfam" id="PF00724">
    <property type="entry name" value="Oxidored_FMN"/>
    <property type="match status" value="1"/>
</dbReference>
<dbReference type="SUPFAM" id="SSF51395">
    <property type="entry name" value="FMN-linked oxidoreductases"/>
    <property type="match status" value="1"/>
</dbReference>
<reference key="1">
    <citation type="journal article" date="2011" name="J. Bacteriol.">
        <title>Genome sequence of lineage III Listeria monocytogenes strain HCC23.</title>
        <authorList>
            <person name="Steele C.L."/>
            <person name="Donaldson J.R."/>
            <person name="Paul D."/>
            <person name="Banes M.M."/>
            <person name="Arick T."/>
            <person name="Bridges S.M."/>
            <person name="Lawrence M.L."/>
        </authorList>
    </citation>
    <scope>NUCLEOTIDE SEQUENCE [LARGE SCALE GENOMIC DNA]</scope>
    <source>
        <strain>HCC23</strain>
    </source>
</reference>
<proteinExistence type="inferred from homology"/>
<sequence length="338" mass="37060">MSKLFSEYKLKDVTLKNRIVMSPMCMYSVENKDGIATDFHFAHYVSRAAGGTGLVILEATAVQEVGRISEFDLGLWNDEQVPALKRLVDGLHYHGAKAGIQLAHAGRKAVLPGEIVAPSAIPFDEKSAKPVELTKEAIKEVVADFKRAAYRAKEAGFDVIEIHAAHGYLIHQFLSPITNRREDNYGGPAGNRYKILSDIIKAVKEVWDGPIIVRVSATDYAHGGLQLEDHIPFAKWMKADGVELIDVSTGGLVNVAPPVFPGYQVPFADEIRRGAGIATGALGLITRGEQAEEILCNERADLIIVGRELLRNPYFAKDAAEQLGETIEGPKQYSRAWK</sequence>
<keyword id="KW-0216">Detoxification</keyword>
<keyword id="KW-0285">Flavoprotein</keyword>
<keyword id="KW-0288">FMN</keyword>
<keyword id="KW-0521">NADP</keyword>
<keyword id="KW-0560">Oxidoreductase</keyword>
<feature type="chain" id="PRO_1000185865" description="NADPH dehydrogenase">
    <location>
        <begin position="1"/>
        <end position="338"/>
    </location>
</feature>
<feature type="binding site" evidence="1">
    <location>
        <begin position="22"/>
        <end position="25"/>
    </location>
    <ligand>
        <name>FMN</name>
        <dbReference type="ChEBI" id="CHEBI:58210"/>
    </ligand>
</feature>
<feature type="binding site" evidence="1">
    <location>
        <position position="27"/>
    </location>
    <ligand>
        <name>substrate</name>
    </ligand>
</feature>
<feature type="binding site" evidence="1">
    <location>
        <position position="59"/>
    </location>
    <ligand>
        <name>FMN</name>
        <dbReference type="ChEBI" id="CHEBI:58210"/>
    </ligand>
</feature>
<feature type="binding site" evidence="1">
    <location>
        <position position="101"/>
    </location>
    <ligand>
        <name>FMN</name>
        <dbReference type="ChEBI" id="CHEBI:58210"/>
    </ligand>
</feature>
<feature type="binding site" evidence="1">
    <location>
        <begin position="163"/>
        <end position="166"/>
    </location>
    <ligand>
        <name>substrate</name>
    </ligand>
</feature>
<feature type="binding site" evidence="1">
    <location>
        <position position="214"/>
    </location>
    <ligand>
        <name>FMN</name>
        <dbReference type="ChEBI" id="CHEBI:58210"/>
    </ligand>
</feature>
<feature type="binding site" evidence="1">
    <location>
        <begin position="306"/>
        <end position="307"/>
    </location>
    <ligand>
        <name>FMN</name>
        <dbReference type="ChEBI" id="CHEBI:58210"/>
    </ligand>
</feature>
<comment type="function">
    <text evidence="1">Catalyzes the reduction of the double bond of an array of alpha,beta-unsaturated aldehydes and ketones. It also reduces the nitro group of nitroester and nitroaromatic compounds. It could have a role in detoxification processes.</text>
</comment>
<comment type="catalytic activity">
    <reaction evidence="1">
        <text>A + NADPH + H(+) = AH2 + NADP(+)</text>
        <dbReference type="Rhea" id="RHEA:13149"/>
        <dbReference type="ChEBI" id="CHEBI:13193"/>
        <dbReference type="ChEBI" id="CHEBI:15378"/>
        <dbReference type="ChEBI" id="CHEBI:17499"/>
        <dbReference type="ChEBI" id="CHEBI:57783"/>
        <dbReference type="ChEBI" id="CHEBI:58349"/>
        <dbReference type="EC" id="1.6.99.1"/>
    </reaction>
</comment>
<comment type="cofactor">
    <cofactor evidence="1">
        <name>FMN</name>
        <dbReference type="ChEBI" id="CHEBI:58210"/>
    </cofactor>
</comment>
<comment type="subunit">
    <text evidence="1">Homotetramer.</text>
</comment>
<comment type="similarity">
    <text evidence="1">Belongs to the NADH:flavin oxidoreductase/NADH oxidase family. NamA subfamily.</text>
</comment>
<protein>
    <recommendedName>
        <fullName evidence="1">NADPH dehydrogenase</fullName>
        <ecNumber evidence="1">1.6.99.1</ecNumber>
    </recommendedName>
</protein>
<gene>
    <name evidence="1" type="primary">namA</name>
    <name type="ordered locus">LMHCC_0129</name>
</gene>
<organism>
    <name type="scientific">Listeria monocytogenes serotype 4a (strain HCC23)</name>
    <dbReference type="NCBI Taxonomy" id="552536"/>
    <lineage>
        <taxon>Bacteria</taxon>
        <taxon>Bacillati</taxon>
        <taxon>Bacillota</taxon>
        <taxon>Bacilli</taxon>
        <taxon>Bacillales</taxon>
        <taxon>Listeriaceae</taxon>
        <taxon>Listeria</taxon>
    </lineage>
</organism>
<accession>B8DBP0</accession>